<reference key="1">
    <citation type="journal article" date="2009" name="Biochem. Biophys. Res. Commun.">
        <title>Isolation, complete amino acid sequence and characterization of a previously unreported post-synaptic neurotoxin - AlphaN3, from the venom of Bungarus candidus.</title>
        <authorList>
            <person name="Karsani S.A."/>
            <person name="Othman I."/>
        </authorList>
    </citation>
    <scope>PROTEIN SEQUENCE</scope>
    <scope>FUNCTION</scope>
    <scope>SUBCELLULAR LOCATION</scope>
    <scope>TOXIC DOSE</scope>
    <source>
        <tissue>Venom</tissue>
    </source>
</reference>
<protein>
    <recommendedName>
        <fullName evidence="1 3">Alpha-bungarotoxin N3</fullName>
        <shortName evidence="3">AlphaN3</shortName>
    </recommendedName>
</protein>
<sequence length="73" mass="7787">IVCHTTATSPISAVTCPPGENLCYRKMCDAICSSRGKVVELGCAATCPSKKPYEEVTCCSNDKCNPHPKQRPG</sequence>
<accession>P85140</accession>
<dbReference type="SMR" id="P85140"/>
<dbReference type="GO" id="GO:0005576">
    <property type="term" value="C:extracellular region"/>
    <property type="evidence" value="ECO:0007669"/>
    <property type="project" value="UniProtKB-SubCell"/>
</dbReference>
<dbReference type="GO" id="GO:0030550">
    <property type="term" value="F:acetylcholine receptor inhibitor activity"/>
    <property type="evidence" value="ECO:0007669"/>
    <property type="project" value="UniProtKB-KW"/>
</dbReference>
<dbReference type="GO" id="GO:0099106">
    <property type="term" value="F:ion channel regulator activity"/>
    <property type="evidence" value="ECO:0007669"/>
    <property type="project" value="UniProtKB-KW"/>
</dbReference>
<dbReference type="GO" id="GO:0090729">
    <property type="term" value="F:toxin activity"/>
    <property type="evidence" value="ECO:0007669"/>
    <property type="project" value="UniProtKB-KW"/>
</dbReference>
<dbReference type="CDD" id="cd00206">
    <property type="entry name" value="TFP_snake_toxin"/>
    <property type="match status" value="1"/>
</dbReference>
<dbReference type="Gene3D" id="2.10.60.10">
    <property type="entry name" value="CD59"/>
    <property type="match status" value="1"/>
</dbReference>
<dbReference type="InterPro" id="IPR003571">
    <property type="entry name" value="Snake_3FTx"/>
</dbReference>
<dbReference type="InterPro" id="IPR045860">
    <property type="entry name" value="Snake_toxin-like_sf"/>
</dbReference>
<dbReference type="InterPro" id="IPR018354">
    <property type="entry name" value="Snake_toxin_con_site"/>
</dbReference>
<dbReference type="InterPro" id="IPR054131">
    <property type="entry name" value="Toxin_cobra-type"/>
</dbReference>
<dbReference type="Pfam" id="PF21947">
    <property type="entry name" value="Toxin_cobra-type"/>
    <property type="match status" value="1"/>
</dbReference>
<dbReference type="SUPFAM" id="SSF57302">
    <property type="entry name" value="Snake toxin-like"/>
    <property type="match status" value="1"/>
</dbReference>
<dbReference type="PROSITE" id="PS00272">
    <property type="entry name" value="SNAKE_TOXIN"/>
    <property type="match status" value="1"/>
</dbReference>
<keyword id="KW-0008">Acetylcholine receptor inhibiting toxin</keyword>
<keyword id="KW-0903">Direct protein sequencing</keyword>
<keyword id="KW-1015">Disulfide bond</keyword>
<keyword id="KW-0872">Ion channel impairing toxin</keyword>
<keyword id="KW-0528">Neurotoxin</keyword>
<keyword id="KW-0629">Postsynaptic neurotoxin</keyword>
<keyword id="KW-0964">Secreted</keyword>
<keyword id="KW-0800">Toxin</keyword>
<organism>
    <name type="scientific">Bungarus candidus</name>
    <name type="common">Malayan krait</name>
    <dbReference type="NCBI Taxonomy" id="92438"/>
    <lineage>
        <taxon>Eukaryota</taxon>
        <taxon>Metazoa</taxon>
        <taxon>Chordata</taxon>
        <taxon>Craniata</taxon>
        <taxon>Vertebrata</taxon>
        <taxon>Euteleostomi</taxon>
        <taxon>Lepidosauria</taxon>
        <taxon>Squamata</taxon>
        <taxon>Bifurcata</taxon>
        <taxon>Unidentata</taxon>
        <taxon>Episquamata</taxon>
        <taxon>Toxicofera</taxon>
        <taxon>Serpentes</taxon>
        <taxon>Colubroidea</taxon>
        <taxon>Elapidae</taxon>
        <taxon>Bungarinae</taxon>
        <taxon>Bungarus</taxon>
    </lineage>
</organism>
<proteinExistence type="evidence at protein level"/>
<name>3L2N3_BUNCA</name>
<evidence type="ECO:0000250" key="1">
    <source>
        <dbReference type="UniProtKB" id="P60615"/>
    </source>
</evidence>
<evidence type="ECO:0000269" key="2">
    <source>
    </source>
</evidence>
<evidence type="ECO:0000303" key="3">
    <source>
    </source>
</evidence>
<evidence type="ECO:0000305" key="4"/>
<comment type="function">
    <text evidence="1 2">Binds with high affinity to muscular (alpha-1/CHRNA1) and neuronal (alpha-7/CHRNA7) nicotinic acetylcholine receptor (nAChR) and inhibits acetylcholine from binding to the receptor, thereby impairing neuromuscular and neuronal transmission (By similarity). Mice injected with this toxin develop flaccid paralysis followed by death. Irreversibly inhibits twitches in a concentration-dependent manner in rat phrenic nerve-hemidiaphragm and chick biventer cervicis muscle (PubMed:19728988).</text>
</comment>
<comment type="subunit">
    <text evidence="1">Monomer in solution, homodimer in crystal state.</text>
</comment>
<comment type="subcellular location">
    <subcellularLocation>
        <location evidence="2">Secreted</location>
    </subcellularLocation>
</comment>
<comment type="tissue specificity">
    <text evidence="4">Expressed by the venom gland.</text>
</comment>
<comment type="toxic dose">
    <text evidence="2">LD(50) is 0.16 ug/g by intravenous injection into mice.</text>
</comment>
<comment type="similarity">
    <text evidence="4">Belongs to the three-finger toxin family. Long-chain subfamily. Type II alpha-neurotoxin sub-subfamily.</text>
</comment>
<feature type="chain" id="PRO_0000287679" description="Alpha-bungarotoxin N3">
    <location>
        <begin position="1"/>
        <end position="73"/>
    </location>
</feature>
<feature type="disulfide bond" evidence="1">
    <location>
        <begin position="3"/>
        <end position="23"/>
    </location>
</feature>
<feature type="disulfide bond" evidence="1">
    <location>
        <begin position="16"/>
        <end position="43"/>
    </location>
</feature>
<feature type="disulfide bond" evidence="1">
    <location>
        <begin position="28"/>
        <end position="32"/>
    </location>
</feature>
<feature type="disulfide bond" evidence="1">
    <location>
        <begin position="47"/>
        <end position="58"/>
    </location>
</feature>
<feature type="disulfide bond" evidence="1">
    <location>
        <begin position="59"/>
        <end position="64"/>
    </location>
</feature>